<proteinExistence type="inferred from homology"/>
<accession>B1X7N0</accession>
<keyword id="KW-0997">Cell inner membrane</keyword>
<keyword id="KW-1003">Cell membrane</keyword>
<keyword id="KW-0472">Membrane</keyword>
<keyword id="KW-0812">Transmembrane</keyword>
<keyword id="KW-1133">Transmembrane helix</keyword>
<sequence>MSKTLNIIWQYLRAFVLIYACLYAGIFIASLLPVTIPGSIIGMLILFVLLALQILPAKWVNPGCYVLIRYMALLFVPIGVGVMQYFDLLRAQFGPVVVSCAVSTLVVFLVVSWSSQLVHGERKVVGQKGSEE</sequence>
<gene>
    <name evidence="1" type="primary">yohJ</name>
    <name type="ordered locus">ECDH10B_2298</name>
</gene>
<organism>
    <name type="scientific">Escherichia coli (strain K12 / DH10B)</name>
    <dbReference type="NCBI Taxonomy" id="316385"/>
    <lineage>
        <taxon>Bacteria</taxon>
        <taxon>Pseudomonadati</taxon>
        <taxon>Pseudomonadota</taxon>
        <taxon>Gammaproteobacteria</taxon>
        <taxon>Enterobacterales</taxon>
        <taxon>Enterobacteriaceae</taxon>
        <taxon>Escherichia</taxon>
    </lineage>
</organism>
<comment type="subcellular location">
    <subcellularLocation>
        <location evidence="1">Cell inner membrane</location>
        <topology evidence="1">Multi-pass membrane protein</topology>
    </subcellularLocation>
</comment>
<comment type="similarity">
    <text evidence="1">Belongs to the UPF0299 family.</text>
</comment>
<evidence type="ECO:0000255" key="1">
    <source>
        <dbReference type="HAMAP-Rule" id="MF_01144"/>
    </source>
</evidence>
<protein>
    <recommendedName>
        <fullName evidence="1">UPF0299 membrane protein YohJ</fullName>
    </recommendedName>
</protein>
<name>YOHJ_ECODH</name>
<dbReference type="EMBL" id="CP000948">
    <property type="protein sequence ID" value="ACB03306.1"/>
    <property type="molecule type" value="Genomic_DNA"/>
</dbReference>
<dbReference type="RefSeq" id="WP_001295452.1">
    <property type="nucleotide sequence ID" value="NC_010473.1"/>
</dbReference>
<dbReference type="SMR" id="B1X7N0"/>
<dbReference type="KEGG" id="ecd:ECDH10B_2298"/>
<dbReference type="HOGENOM" id="CLU_113736_1_1_6"/>
<dbReference type="GO" id="GO:0005886">
    <property type="term" value="C:plasma membrane"/>
    <property type="evidence" value="ECO:0007669"/>
    <property type="project" value="UniProtKB-SubCell"/>
</dbReference>
<dbReference type="HAMAP" id="MF_01144">
    <property type="entry name" value="UPF0299"/>
    <property type="match status" value="1"/>
</dbReference>
<dbReference type="InterPro" id="IPR005538">
    <property type="entry name" value="LrgA/CidA"/>
</dbReference>
<dbReference type="InterPro" id="IPR022957">
    <property type="entry name" value="Uncharacterised_UPF0299"/>
</dbReference>
<dbReference type="NCBIfam" id="NF002494">
    <property type="entry name" value="PRK01821.1"/>
    <property type="match status" value="1"/>
</dbReference>
<dbReference type="PANTHER" id="PTHR33931">
    <property type="entry name" value="HOLIN-LIKE PROTEIN CIDA-RELATED"/>
    <property type="match status" value="1"/>
</dbReference>
<dbReference type="PANTHER" id="PTHR33931:SF5">
    <property type="entry name" value="UPF0299 MEMBRANE PROTEIN YOHJ"/>
    <property type="match status" value="1"/>
</dbReference>
<dbReference type="Pfam" id="PF03788">
    <property type="entry name" value="LrgA"/>
    <property type="match status" value="1"/>
</dbReference>
<reference key="1">
    <citation type="journal article" date="2008" name="J. Bacteriol.">
        <title>The complete genome sequence of Escherichia coli DH10B: insights into the biology of a laboratory workhorse.</title>
        <authorList>
            <person name="Durfee T."/>
            <person name="Nelson R."/>
            <person name="Baldwin S."/>
            <person name="Plunkett G. III"/>
            <person name="Burland V."/>
            <person name="Mau B."/>
            <person name="Petrosino J.F."/>
            <person name="Qin X."/>
            <person name="Muzny D.M."/>
            <person name="Ayele M."/>
            <person name="Gibbs R.A."/>
            <person name="Csorgo B."/>
            <person name="Posfai G."/>
            <person name="Weinstock G.M."/>
            <person name="Blattner F.R."/>
        </authorList>
    </citation>
    <scope>NUCLEOTIDE SEQUENCE [LARGE SCALE GENOMIC DNA]</scope>
    <source>
        <strain>K12 / DH10B</strain>
    </source>
</reference>
<feature type="chain" id="PRO_1000137359" description="UPF0299 membrane protein YohJ">
    <location>
        <begin position="1"/>
        <end position="132"/>
    </location>
</feature>
<feature type="transmembrane region" description="Helical" evidence="1">
    <location>
        <begin position="7"/>
        <end position="27"/>
    </location>
</feature>
<feature type="transmembrane region" description="Helical" evidence="1">
    <location>
        <begin position="31"/>
        <end position="51"/>
    </location>
</feature>
<feature type="transmembrane region" description="Helical" evidence="1">
    <location>
        <begin position="63"/>
        <end position="83"/>
    </location>
</feature>
<feature type="transmembrane region" description="Helical" evidence="1">
    <location>
        <begin position="93"/>
        <end position="113"/>
    </location>
</feature>